<sequence length="273" mass="32963">MAYQQEITQIGSNFQLDETNLEIDENKYSSRKLCFLIKRYIKDFYGYIYIPYDYFKRDDWDIHKTLNDNEDMLFYNQEFVDKNDKDRFYEVFDKFTELLGEIFSIDGNLCNCLYNFPSVRELKINKNSTESFLFALFNSRKYYYISPAYKLQLYYKYSDKCDGEELVEKILEKLNTIVSLVKKEMKNFTDIYENIITSYVYEKPFEEEKQNSYVKGFVNSILLEIIELSDKLIKLHVYGIHTLINEVIEYYLPMDEYNNFDSEQHDGRKLVIV</sequence>
<feature type="chain" id="PRO_0000247391" description="Uncharacterized protein R304">
    <location>
        <begin position="1"/>
        <end position="273"/>
    </location>
</feature>
<name>YR304_MIMIV</name>
<keyword id="KW-1185">Reference proteome</keyword>
<organism>
    <name type="scientific">Acanthamoeba polyphaga mimivirus</name>
    <name type="common">APMV</name>
    <dbReference type="NCBI Taxonomy" id="212035"/>
    <lineage>
        <taxon>Viruses</taxon>
        <taxon>Varidnaviria</taxon>
        <taxon>Bamfordvirae</taxon>
        <taxon>Nucleocytoviricota</taxon>
        <taxon>Megaviricetes</taxon>
        <taxon>Imitervirales</taxon>
        <taxon>Mimiviridae</taxon>
        <taxon>Megamimivirinae</taxon>
        <taxon>Mimivirus</taxon>
        <taxon>Mimivirus bradfordmassiliense</taxon>
    </lineage>
</organism>
<protein>
    <recommendedName>
        <fullName>Uncharacterized protein R304</fullName>
    </recommendedName>
</protein>
<dbReference type="EMBL" id="AY653733">
    <property type="protein sequence ID" value="AAV50576.1"/>
    <property type="molecule type" value="Genomic_DNA"/>
</dbReference>
<dbReference type="SMR" id="Q5UPY9"/>
<dbReference type="KEGG" id="vg:9924920"/>
<dbReference type="OrthoDB" id="20132at10239"/>
<dbReference type="Proteomes" id="UP000001134">
    <property type="component" value="Genome"/>
</dbReference>
<gene>
    <name type="ordered locus">MIMI_R304</name>
</gene>
<accession>Q5UPY9</accession>
<organismHost>
    <name type="scientific">Acanthamoeba polyphaga</name>
    <name type="common">Amoeba</name>
    <dbReference type="NCBI Taxonomy" id="5757"/>
</organismHost>
<proteinExistence type="predicted"/>
<reference key="1">
    <citation type="journal article" date="2004" name="Science">
        <title>The 1.2-megabase genome sequence of Mimivirus.</title>
        <authorList>
            <person name="Raoult D."/>
            <person name="Audic S."/>
            <person name="Robert C."/>
            <person name="Abergel C."/>
            <person name="Renesto P."/>
            <person name="Ogata H."/>
            <person name="La Scola B."/>
            <person name="Susan M."/>
            <person name="Claverie J.-M."/>
        </authorList>
    </citation>
    <scope>NUCLEOTIDE SEQUENCE [LARGE SCALE GENOMIC DNA]</scope>
    <source>
        <strain>Rowbotham-Bradford</strain>
    </source>
</reference>